<name>NDHK_NASOF</name>
<feature type="chain" id="PRO_0000358562" description="NAD(P)H-quinone oxidoreductase subunit K, chloroplastic">
    <location>
        <begin position="1"/>
        <end position="225"/>
    </location>
</feature>
<feature type="binding site" evidence="1">
    <location>
        <position position="43"/>
    </location>
    <ligand>
        <name>[4Fe-4S] cluster</name>
        <dbReference type="ChEBI" id="CHEBI:49883"/>
    </ligand>
</feature>
<feature type="binding site" evidence="1">
    <location>
        <position position="44"/>
    </location>
    <ligand>
        <name>[4Fe-4S] cluster</name>
        <dbReference type="ChEBI" id="CHEBI:49883"/>
    </ligand>
</feature>
<feature type="binding site" evidence="1">
    <location>
        <position position="108"/>
    </location>
    <ligand>
        <name>[4Fe-4S] cluster</name>
        <dbReference type="ChEBI" id="CHEBI:49883"/>
    </ligand>
</feature>
<feature type="binding site" evidence="1">
    <location>
        <position position="139"/>
    </location>
    <ligand>
        <name>[4Fe-4S] cluster</name>
        <dbReference type="ChEBI" id="CHEBI:49883"/>
    </ligand>
</feature>
<comment type="function">
    <text evidence="1">NDH shuttles electrons from NAD(P)H:plastoquinone, via FMN and iron-sulfur (Fe-S) centers, to quinones in the photosynthetic chain and possibly in a chloroplast respiratory chain. The immediate electron acceptor for the enzyme in this species is believed to be plastoquinone. Couples the redox reaction to proton translocation, and thus conserves the redox energy in a proton gradient.</text>
</comment>
<comment type="catalytic activity">
    <reaction evidence="1">
        <text>a plastoquinone + NADH + (n+1) H(+)(in) = a plastoquinol + NAD(+) + n H(+)(out)</text>
        <dbReference type="Rhea" id="RHEA:42608"/>
        <dbReference type="Rhea" id="RHEA-COMP:9561"/>
        <dbReference type="Rhea" id="RHEA-COMP:9562"/>
        <dbReference type="ChEBI" id="CHEBI:15378"/>
        <dbReference type="ChEBI" id="CHEBI:17757"/>
        <dbReference type="ChEBI" id="CHEBI:57540"/>
        <dbReference type="ChEBI" id="CHEBI:57945"/>
        <dbReference type="ChEBI" id="CHEBI:62192"/>
    </reaction>
</comment>
<comment type="catalytic activity">
    <reaction evidence="1">
        <text>a plastoquinone + NADPH + (n+1) H(+)(in) = a plastoquinol + NADP(+) + n H(+)(out)</text>
        <dbReference type="Rhea" id="RHEA:42612"/>
        <dbReference type="Rhea" id="RHEA-COMP:9561"/>
        <dbReference type="Rhea" id="RHEA-COMP:9562"/>
        <dbReference type="ChEBI" id="CHEBI:15378"/>
        <dbReference type="ChEBI" id="CHEBI:17757"/>
        <dbReference type="ChEBI" id="CHEBI:57783"/>
        <dbReference type="ChEBI" id="CHEBI:58349"/>
        <dbReference type="ChEBI" id="CHEBI:62192"/>
    </reaction>
</comment>
<comment type="cofactor">
    <cofactor evidence="1">
        <name>[4Fe-4S] cluster</name>
        <dbReference type="ChEBI" id="CHEBI:49883"/>
    </cofactor>
    <text evidence="1">Binds 1 [4Fe-4S] cluster.</text>
</comment>
<comment type="subunit">
    <text evidence="1">NDH is composed of at least 16 different subunits, 5 of which are encoded in the nucleus.</text>
</comment>
<comment type="subcellular location">
    <subcellularLocation>
        <location evidence="1">Plastid</location>
        <location evidence="1">Chloroplast thylakoid membrane</location>
        <topology evidence="1">Peripheral membrane protein</topology>
        <orientation evidence="1">Stromal side</orientation>
    </subcellularLocation>
</comment>
<comment type="similarity">
    <text evidence="1">Belongs to the complex I 20 kDa subunit family.</text>
</comment>
<geneLocation type="chloroplast"/>
<proteinExistence type="inferred from homology"/>
<dbReference type="EC" id="7.1.1.-" evidence="1"/>
<dbReference type="EMBL" id="AP009376">
    <property type="protein sequence ID" value="BAF50642.1"/>
    <property type="molecule type" value="Genomic_DNA"/>
</dbReference>
<dbReference type="RefSeq" id="YP_001123818.1">
    <property type="nucleotide sequence ID" value="NC_009275.1"/>
</dbReference>
<dbReference type="SMR" id="A4QLT7"/>
<dbReference type="GeneID" id="4962175"/>
<dbReference type="GO" id="GO:0009535">
    <property type="term" value="C:chloroplast thylakoid membrane"/>
    <property type="evidence" value="ECO:0007669"/>
    <property type="project" value="UniProtKB-SubCell"/>
</dbReference>
<dbReference type="GO" id="GO:0045271">
    <property type="term" value="C:respiratory chain complex I"/>
    <property type="evidence" value="ECO:0007669"/>
    <property type="project" value="TreeGrafter"/>
</dbReference>
<dbReference type="GO" id="GO:0051539">
    <property type="term" value="F:4 iron, 4 sulfur cluster binding"/>
    <property type="evidence" value="ECO:0007669"/>
    <property type="project" value="UniProtKB-KW"/>
</dbReference>
<dbReference type="GO" id="GO:0005506">
    <property type="term" value="F:iron ion binding"/>
    <property type="evidence" value="ECO:0007669"/>
    <property type="project" value="UniProtKB-UniRule"/>
</dbReference>
<dbReference type="GO" id="GO:0008137">
    <property type="term" value="F:NADH dehydrogenase (ubiquinone) activity"/>
    <property type="evidence" value="ECO:0007669"/>
    <property type="project" value="InterPro"/>
</dbReference>
<dbReference type="GO" id="GO:0048038">
    <property type="term" value="F:quinone binding"/>
    <property type="evidence" value="ECO:0007669"/>
    <property type="project" value="UniProtKB-KW"/>
</dbReference>
<dbReference type="GO" id="GO:0009060">
    <property type="term" value="P:aerobic respiration"/>
    <property type="evidence" value="ECO:0007669"/>
    <property type="project" value="TreeGrafter"/>
</dbReference>
<dbReference type="GO" id="GO:0015990">
    <property type="term" value="P:electron transport coupled proton transport"/>
    <property type="evidence" value="ECO:0007669"/>
    <property type="project" value="TreeGrafter"/>
</dbReference>
<dbReference type="GO" id="GO:0019684">
    <property type="term" value="P:photosynthesis, light reaction"/>
    <property type="evidence" value="ECO:0007669"/>
    <property type="project" value="UniProtKB-UniRule"/>
</dbReference>
<dbReference type="FunFam" id="3.40.50.12280:FF:000003">
    <property type="entry name" value="NAD(P)H-quinone oxidoreductase subunit K, chloroplastic"/>
    <property type="match status" value="1"/>
</dbReference>
<dbReference type="Gene3D" id="3.40.50.12280">
    <property type="match status" value="1"/>
</dbReference>
<dbReference type="HAMAP" id="MF_01356">
    <property type="entry name" value="NDH1_NuoB"/>
    <property type="match status" value="1"/>
</dbReference>
<dbReference type="InterPro" id="IPR006137">
    <property type="entry name" value="NADH_UbQ_OxRdtase-like_20kDa"/>
</dbReference>
<dbReference type="InterPro" id="IPR006138">
    <property type="entry name" value="NADH_UQ_OxRdtase_20Kd_su"/>
</dbReference>
<dbReference type="NCBIfam" id="TIGR01957">
    <property type="entry name" value="nuoB_fam"/>
    <property type="match status" value="1"/>
</dbReference>
<dbReference type="NCBIfam" id="NF005012">
    <property type="entry name" value="PRK06411.1"/>
    <property type="match status" value="1"/>
</dbReference>
<dbReference type="PANTHER" id="PTHR11995">
    <property type="entry name" value="NADH DEHYDROGENASE"/>
    <property type="match status" value="1"/>
</dbReference>
<dbReference type="PANTHER" id="PTHR11995:SF14">
    <property type="entry name" value="NADH DEHYDROGENASE [UBIQUINONE] IRON-SULFUR PROTEIN 7, MITOCHONDRIAL"/>
    <property type="match status" value="1"/>
</dbReference>
<dbReference type="Pfam" id="PF01058">
    <property type="entry name" value="Oxidored_q6"/>
    <property type="match status" value="1"/>
</dbReference>
<dbReference type="SUPFAM" id="SSF56770">
    <property type="entry name" value="HydA/Nqo6-like"/>
    <property type="match status" value="1"/>
</dbReference>
<dbReference type="PROSITE" id="PS01150">
    <property type="entry name" value="COMPLEX1_20K"/>
    <property type="match status" value="1"/>
</dbReference>
<protein>
    <recommendedName>
        <fullName evidence="1">NAD(P)H-quinone oxidoreductase subunit K, chloroplastic</fullName>
        <ecNumber evidence="1">7.1.1.-</ecNumber>
    </recommendedName>
    <alternativeName>
        <fullName evidence="1">NAD(P)H dehydrogenase subunit K</fullName>
    </alternativeName>
    <alternativeName>
        <fullName evidence="1">NADH-plastoquinone oxidoreductase subunit K</fullName>
    </alternativeName>
</protein>
<organism>
    <name type="scientific">Nasturtium officinale</name>
    <name type="common">Watercress</name>
    <name type="synonym">Rorippa nasturtium-aquaticum</name>
    <dbReference type="NCBI Taxonomy" id="65948"/>
    <lineage>
        <taxon>Eukaryota</taxon>
        <taxon>Viridiplantae</taxon>
        <taxon>Streptophyta</taxon>
        <taxon>Embryophyta</taxon>
        <taxon>Tracheophyta</taxon>
        <taxon>Spermatophyta</taxon>
        <taxon>Magnoliopsida</taxon>
        <taxon>eudicotyledons</taxon>
        <taxon>Gunneridae</taxon>
        <taxon>Pentapetalae</taxon>
        <taxon>rosids</taxon>
        <taxon>malvids</taxon>
        <taxon>Brassicales</taxon>
        <taxon>Brassicaceae</taxon>
        <taxon>Cardamineae</taxon>
        <taxon>Nasturtium</taxon>
    </lineage>
</organism>
<accession>A4QLT7</accession>
<reference key="1">
    <citation type="submission" date="2007-03" db="EMBL/GenBank/DDBJ databases">
        <title>Sequencing analysis of Nasturtium officinale chloroplast DNA.</title>
        <authorList>
            <person name="Hosouchi T."/>
            <person name="Tsuruoka H."/>
            <person name="Kotani H."/>
        </authorList>
    </citation>
    <scope>NUCLEOTIDE SEQUENCE [LARGE SCALE GENOMIC DNA]</scope>
</reference>
<keyword id="KW-0004">4Fe-4S</keyword>
<keyword id="KW-0150">Chloroplast</keyword>
<keyword id="KW-0408">Iron</keyword>
<keyword id="KW-0411">Iron-sulfur</keyword>
<keyword id="KW-0472">Membrane</keyword>
<keyword id="KW-0479">Metal-binding</keyword>
<keyword id="KW-0520">NAD</keyword>
<keyword id="KW-0521">NADP</keyword>
<keyword id="KW-0934">Plastid</keyword>
<keyword id="KW-0618">Plastoquinone</keyword>
<keyword id="KW-0874">Quinone</keyword>
<keyword id="KW-0793">Thylakoid</keyword>
<keyword id="KW-1278">Translocase</keyword>
<keyword id="KW-0813">Transport</keyword>
<evidence type="ECO:0000255" key="1">
    <source>
        <dbReference type="HAMAP-Rule" id="MF_01356"/>
    </source>
</evidence>
<sequence>MNSIKFPVLDRTTKNSVISTTLNDLSNWSRLSSLWPLLYGTSCCFIEFASLIGSRFDFDRYGLVPRSSPRQADLILTAGTVTMKMAPSLVRLYEQMPEPKYVIAMGACTITGGMFSTDSYSTVRGVDKLIPVDVYLPGCPPKPEAVIDAITKLRKKIAREIYKDRIRPQQGNRCFTTNHKFFVVRSPHTGNYDQELLYAPSSTSEISTETFFKYKSPVSSNELVN</sequence>
<gene>
    <name evidence="1" type="primary">ndhK</name>
</gene>